<keyword id="KW-0687">Ribonucleoprotein</keyword>
<keyword id="KW-0689">Ribosomal protein</keyword>
<sequence>MSLKIRLTRGGAKKRPYYRIVVADSRSPRDGRFIEKVGVYDPMKPKDDPARVSLESEKIQAWLAKGAQPTDRVLRFLDAAGLAKRPARNNPKKAEPGQKAKERAAARAEKAGAGDDAAA</sequence>
<gene>
    <name evidence="1" type="primary">rpsP</name>
    <name type="ordered locus">M446_3682</name>
</gene>
<comment type="similarity">
    <text evidence="1">Belongs to the bacterial ribosomal protein bS16 family.</text>
</comment>
<feature type="chain" id="PRO_1000196436" description="Small ribosomal subunit protein bS16">
    <location>
        <begin position="1"/>
        <end position="119"/>
    </location>
</feature>
<feature type="region of interest" description="Disordered" evidence="2">
    <location>
        <begin position="81"/>
        <end position="119"/>
    </location>
</feature>
<feature type="compositionally biased region" description="Basic and acidic residues" evidence="2">
    <location>
        <begin position="92"/>
        <end position="113"/>
    </location>
</feature>
<evidence type="ECO:0000255" key="1">
    <source>
        <dbReference type="HAMAP-Rule" id="MF_00385"/>
    </source>
</evidence>
<evidence type="ECO:0000256" key="2">
    <source>
        <dbReference type="SAM" id="MobiDB-lite"/>
    </source>
</evidence>
<evidence type="ECO:0000305" key="3"/>
<accession>B0UCL4</accession>
<name>RS16_METS4</name>
<organism>
    <name type="scientific">Methylobacterium sp. (strain 4-46)</name>
    <dbReference type="NCBI Taxonomy" id="426117"/>
    <lineage>
        <taxon>Bacteria</taxon>
        <taxon>Pseudomonadati</taxon>
        <taxon>Pseudomonadota</taxon>
        <taxon>Alphaproteobacteria</taxon>
        <taxon>Hyphomicrobiales</taxon>
        <taxon>Methylobacteriaceae</taxon>
        <taxon>Methylobacterium</taxon>
    </lineage>
</organism>
<dbReference type="EMBL" id="CP000943">
    <property type="protein sequence ID" value="ACA18063.1"/>
    <property type="molecule type" value="Genomic_DNA"/>
</dbReference>
<dbReference type="RefSeq" id="WP_012333462.1">
    <property type="nucleotide sequence ID" value="NC_010511.1"/>
</dbReference>
<dbReference type="SMR" id="B0UCL4"/>
<dbReference type="STRING" id="426117.M446_3682"/>
<dbReference type="KEGG" id="met:M446_3682"/>
<dbReference type="eggNOG" id="COG0228">
    <property type="taxonomic scope" value="Bacteria"/>
</dbReference>
<dbReference type="HOGENOM" id="CLU_100590_3_1_5"/>
<dbReference type="GO" id="GO:0005737">
    <property type="term" value="C:cytoplasm"/>
    <property type="evidence" value="ECO:0007669"/>
    <property type="project" value="UniProtKB-ARBA"/>
</dbReference>
<dbReference type="GO" id="GO:0015935">
    <property type="term" value="C:small ribosomal subunit"/>
    <property type="evidence" value="ECO:0007669"/>
    <property type="project" value="TreeGrafter"/>
</dbReference>
<dbReference type="GO" id="GO:0003735">
    <property type="term" value="F:structural constituent of ribosome"/>
    <property type="evidence" value="ECO:0007669"/>
    <property type="project" value="InterPro"/>
</dbReference>
<dbReference type="GO" id="GO:0006412">
    <property type="term" value="P:translation"/>
    <property type="evidence" value="ECO:0007669"/>
    <property type="project" value="UniProtKB-UniRule"/>
</dbReference>
<dbReference type="Gene3D" id="3.30.1320.10">
    <property type="match status" value="1"/>
</dbReference>
<dbReference type="HAMAP" id="MF_00385">
    <property type="entry name" value="Ribosomal_bS16"/>
    <property type="match status" value="1"/>
</dbReference>
<dbReference type="InterPro" id="IPR000307">
    <property type="entry name" value="Ribosomal_bS16"/>
</dbReference>
<dbReference type="InterPro" id="IPR020592">
    <property type="entry name" value="Ribosomal_bS16_CS"/>
</dbReference>
<dbReference type="InterPro" id="IPR023803">
    <property type="entry name" value="Ribosomal_bS16_dom_sf"/>
</dbReference>
<dbReference type="NCBIfam" id="TIGR00002">
    <property type="entry name" value="S16"/>
    <property type="match status" value="1"/>
</dbReference>
<dbReference type="PANTHER" id="PTHR12919">
    <property type="entry name" value="30S RIBOSOMAL PROTEIN S16"/>
    <property type="match status" value="1"/>
</dbReference>
<dbReference type="PANTHER" id="PTHR12919:SF20">
    <property type="entry name" value="SMALL RIBOSOMAL SUBUNIT PROTEIN BS16M"/>
    <property type="match status" value="1"/>
</dbReference>
<dbReference type="Pfam" id="PF00886">
    <property type="entry name" value="Ribosomal_S16"/>
    <property type="match status" value="1"/>
</dbReference>
<dbReference type="SUPFAM" id="SSF54565">
    <property type="entry name" value="Ribosomal protein S16"/>
    <property type="match status" value="1"/>
</dbReference>
<dbReference type="PROSITE" id="PS00732">
    <property type="entry name" value="RIBOSOMAL_S16"/>
    <property type="match status" value="1"/>
</dbReference>
<protein>
    <recommendedName>
        <fullName evidence="1">Small ribosomal subunit protein bS16</fullName>
    </recommendedName>
    <alternativeName>
        <fullName evidence="3">30S ribosomal protein S16</fullName>
    </alternativeName>
</protein>
<proteinExistence type="inferred from homology"/>
<reference key="1">
    <citation type="submission" date="2008-02" db="EMBL/GenBank/DDBJ databases">
        <title>Complete sequence of chromosome of Methylobacterium sp. 4-46.</title>
        <authorList>
            <consortium name="US DOE Joint Genome Institute"/>
            <person name="Copeland A."/>
            <person name="Lucas S."/>
            <person name="Lapidus A."/>
            <person name="Glavina del Rio T."/>
            <person name="Dalin E."/>
            <person name="Tice H."/>
            <person name="Bruce D."/>
            <person name="Goodwin L."/>
            <person name="Pitluck S."/>
            <person name="Chertkov O."/>
            <person name="Brettin T."/>
            <person name="Detter J.C."/>
            <person name="Han C."/>
            <person name="Kuske C.R."/>
            <person name="Schmutz J."/>
            <person name="Larimer F."/>
            <person name="Land M."/>
            <person name="Hauser L."/>
            <person name="Kyrpides N."/>
            <person name="Ivanova N."/>
            <person name="Marx C.J."/>
            <person name="Richardson P."/>
        </authorList>
    </citation>
    <scope>NUCLEOTIDE SEQUENCE [LARGE SCALE GENOMIC DNA]</scope>
    <source>
        <strain>4-46</strain>
    </source>
</reference>